<comment type="function">
    <text evidence="1">Multifunctional regulator of fatty acid metabolism.</text>
</comment>
<comment type="subunit">
    <text evidence="1">Homodimer.</text>
</comment>
<comment type="subcellular location">
    <subcellularLocation>
        <location evidence="1">Cytoplasm</location>
    </subcellularLocation>
</comment>
<organism>
    <name type="scientific">Yersinia pseudotuberculosis serotype O:3 (strain YPIII)</name>
    <dbReference type="NCBI Taxonomy" id="502800"/>
    <lineage>
        <taxon>Bacteria</taxon>
        <taxon>Pseudomonadati</taxon>
        <taxon>Pseudomonadota</taxon>
        <taxon>Gammaproteobacteria</taxon>
        <taxon>Enterobacterales</taxon>
        <taxon>Yersiniaceae</taxon>
        <taxon>Yersinia</taxon>
    </lineage>
</organism>
<accession>B1JLH6</accession>
<name>FADR_YERPY</name>
<feature type="chain" id="PRO_1000132335" description="Fatty acid metabolism regulator protein">
    <location>
        <begin position="1"/>
        <end position="239"/>
    </location>
</feature>
<feature type="domain" description="HTH gntR-type" evidence="1">
    <location>
        <begin position="6"/>
        <end position="74"/>
    </location>
</feature>
<feature type="DNA-binding region" description="H-T-H motif" evidence="1">
    <location>
        <begin position="34"/>
        <end position="53"/>
    </location>
</feature>
<proteinExistence type="inferred from homology"/>
<keyword id="KW-0010">Activator</keyword>
<keyword id="KW-0963">Cytoplasm</keyword>
<keyword id="KW-0238">DNA-binding</keyword>
<keyword id="KW-0276">Fatty acid metabolism</keyword>
<keyword id="KW-0443">Lipid metabolism</keyword>
<keyword id="KW-0678">Repressor</keyword>
<keyword id="KW-0804">Transcription</keyword>
<keyword id="KW-0805">Transcription regulation</keyword>
<reference key="1">
    <citation type="submission" date="2008-02" db="EMBL/GenBank/DDBJ databases">
        <title>Complete sequence of Yersinia pseudotuberculosis YPIII.</title>
        <authorList>
            <consortium name="US DOE Joint Genome Institute"/>
            <person name="Copeland A."/>
            <person name="Lucas S."/>
            <person name="Lapidus A."/>
            <person name="Glavina del Rio T."/>
            <person name="Dalin E."/>
            <person name="Tice H."/>
            <person name="Bruce D."/>
            <person name="Goodwin L."/>
            <person name="Pitluck S."/>
            <person name="Munk A.C."/>
            <person name="Brettin T."/>
            <person name="Detter J.C."/>
            <person name="Han C."/>
            <person name="Tapia R."/>
            <person name="Schmutz J."/>
            <person name="Larimer F."/>
            <person name="Land M."/>
            <person name="Hauser L."/>
            <person name="Challacombe J.F."/>
            <person name="Green L."/>
            <person name="Lindler L.E."/>
            <person name="Nikolich M.P."/>
            <person name="Richardson P."/>
        </authorList>
    </citation>
    <scope>NUCLEOTIDE SEQUENCE [LARGE SCALE GENOMIC DNA]</scope>
    <source>
        <strain>YPIII</strain>
    </source>
</reference>
<sequence>MVIKAQSPAGFAEEYIIESIWNNRFPPGSILPAERELSELIGVTRTTLREVLQRLARDGWLTIQHGKPTKVNNFWETSGLNILETLARLDHDSVPQLIDNLLAVRTNIATIFVRTAIRHHPEKAQEILARAKTVDDNAEAFTALDYGIFRGLAFASGNPIYGLILNGLKGLYTRVGRYYFSNPEARKLALTFYNKLSTLCDTESYDQVLECLRTYGKESGAIWHSMQGTMPSDLAEARR</sequence>
<evidence type="ECO:0000255" key="1">
    <source>
        <dbReference type="HAMAP-Rule" id="MF_00696"/>
    </source>
</evidence>
<protein>
    <recommendedName>
        <fullName evidence="1">Fatty acid metabolism regulator protein</fullName>
    </recommendedName>
</protein>
<dbReference type="EMBL" id="CP000950">
    <property type="protein sequence ID" value="ACA68395.1"/>
    <property type="molecule type" value="Genomic_DNA"/>
</dbReference>
<dbReference type="RefSeq" id="WP_002211688.1">
    <property type="nucleotide sequence ID" value="NZ_CP009792.1"/>
</dbReference>
<dbReference type="SMR" id="B1JLH6"/>
<dbReference type="GeneID" id="96665563"/>
<dbReference type="KEGG" id="ypy:YPK_2109"/>
<dbReference type="PATRIC" id="fig|502800.11.peg.2784"/>
<dbReference type="GO" id="GO:0005737">
    <property type="term" value="C:cytoplasm"/>
    <property type="evidence" value="ECO:0007669"/>
    <property type="project" value="UniProtKB-SubCell"/>
</dbReference>
<dbReference type="GO" id="GO:0003677">
    <property type="term" value="F:DNA binding"/>
    <property type="evidence" value="ECO:0007669"/>
    <property type="project" value="UniProtKB-KW"/>
</dbReference>
<dbReference type="GO" id="GO:0003700">
    <property type="term" value="F:DNA-binding transcription factor activity"/>
    <property type="evidence" value="ECO:0007669"/>
    <property type="project" value="UniProtKB-UniRule"/>
</dbReference>
<dbReference type="GO" id="GO:0000062">
    <property type="term" value="F:fatty-acyl-CoA binding"/>
    <property type="evidence" value="ECO:0007669"/>
    <property type="project" value="InterPro"/>
</dbReference>
<dbReference type="GO" id="GO:0006631">
    <property type="term" value="P:fatty acid metabolic process"/>
    <property type="evidence" value="ECO:0007669"/>
    <property type="project" value="UniProtKB-KW"/>
</dbReference>
<dbReference type="GO" id="GO:0019217">
    <property type="term" value="P:regulation of fatty acid metabolic process"/>
    <property type="evidence" value="ECO:0007669"/>
    <property type="project" value="UniProtKB-UniRule"/>
</dbReference>
<dbReference type="CDD" id="cd07377">
    <property type="entry name" value="WHTH_GntR"/>
    <property type="match status" value="1"/>
</dbReference>
<dbReference type="FunFam" id="1.10.10.10:FF:000036">
    <property type="entry name" value="Fatty acid metabolism regulator protein"/>
    <property type="match status" value="1"/>
</dbReference>
<dbReference type="Gene3D" id="1.20.120.530">
    <property type="entry name" value="GntR ligand-binding domain-like"/>
    <property type="match status" value="1"/>
</dbReference>
<dbReference type="Gene3D" id="1.10.10.10">
    <property type="entry name" value="Winged helix-like DNA-binding domain superfamily/Winged helix DNA-binding domain"/>
    <property type="match status" value="1"/>
</dbReference>
<dbReference type="HAMAP" id="MF_00696">
    <property type="entry name" value="HTH_FadR"/>
    <property type="match status" value="1"/>
</dbReference>
<dbReference type="InterPro" id="IPR014178">
    <property type="entry name" value="FA-response_TF_FadR"/>
</dbReference>
<dbReference type="InterPro" id="IPR028374">
    <property type="entry name" value="FadR_C"/>
</dbReference>
<dbReference type="InterPro" id="IPR008920">
    <property type="entry name" value="TF_FadR/GntR_C"/>
</dbReference>
<dbReference type="InterPro" id="IPR000524">
    <property type="entry name" value="Tscrpt_reg_HTH_GntR"/>
</dbReference>
<dbReference type="InterPro" id="IPR036388">
    <property type="entry name" value="WH-like_DNA-bd_sf"/>
</dbReference>
<dbReference type="InterPro" id="IPR036390">
    <property type="entry name" value="WH_DNA-bd_sf"/>
</dbReference>
<dbReference type="NCBIfam" id="TIGR02812">
    <property type="entry name" value="fadR_gamma"/>
    <property type="match status" value="1"/>
</dbReference>
<dbReference type="NCBIfam" id="NF003444">
    <property type="entry name" value="PRK04984.1"/>
    <property type="match status" value="1"/>
</dbReference>
<dbReference type="PANTHER" id="PTHR43537:SF52">
    <property type="entry name" value="FATTY ACID METABOLISM REGULATOR PROTEIN"/>
    <property type="match status" value="1"/>
</dbReference>
<dbReference type="PANTHER" id="PTHR43537">
    <property type="entry name" value="TRANSCRIPTIONAL REGULATOR, GNTR FAMILY"/>
    <property type="match status" value="1"/>
</dbReference>
<dbReference type="Pfam" id="PF07840">
    <property type="entry name" value="FadR_C"/>
    <property type="match status" value="1"/>
</dbReference>
<dbReference type="Pfam" id="PF00392">
    <property type="entry name" value="GntR"/>
    <property type="match status" value="1"/>
</dbReference>
<dbReference type="PRINTS" id="PR00035">
    <property type="entry name" value="HTHGNTR"/>
</dbReference>
<dbReference type="SMART" id="SM00345">
    <property type="entry name" value="HTH_GNTR"/>
    <property type="match status" value="1"/>
</dbReference>
<dbReference type="SUPFAM" id="SSF48008">
    <property type="entry name" value="GntR ligand-binding domain-like"/>
    <property type="match status" value="1"/>
</dbReference>
<dbReference type="SUPFAM" id="SSF46785">
    <property type="entry name" value="Winged helix' DNA-binding domain"/>
    <property type="match status" value="1"/>
</dbReference>
<dbReference type="PROSITE" id="PS50949">
    <property type="entry name" value="HTH_GNTR"/>
    <property type="match status" value="1"/>
</dbReference>
<gene>
    <name evidence="1" type="primary">fadR</name>
    <name type="ordered locus">YPK_2109</name>
</gene>